<proteinExistence type="inferred from homology"/>
<organism>
    <name type="scientific">Caenorhabditis elegans</name>
    <dbReference type="NCBI Taxonomy" id="6239"/>
    <lineage>
        <taxon>Eukaryota</taxon>
        <taxon>Metazoa</taxon>
        <taxon>Ecdysozoa</taxon>
        <taxon>Nematoda</taxon>
        <taxon>Chromadorea</taxon>
        <taxon>Rhabditida</taxon>
        <taxon>Rhabditina</taxon>
        <taxon>Rhabditomorpha</taxon>
        <taxon>Rhabditoidea</taxon>
        <taxon>Rhabditidae</taxon>
        <taxon>Peloderinae</taxon>
        <taxon>Caenorhabditis</taxon>
    </lineage>
</organism>
<dbReference type="EMBL" id="BX284603">
    <property type="protein sequence ID" value="CAA84731.2"/>
    <property type="molecule type" value="Genomic_DNA"/>
</dbReference>
<dbReference type="PIR" id="T24430">
    <property type="entry name" value="T24430"/>
</dbReference>
<dbReference type="RefSeq" id="NP_001369853.1">
    <property type="nucleotide sequence ID" value="NM_001384079.2"/>
</dbReference>
<dbReference type="RefSeq" id="NP_497966.2">
    <property type="nucleotide sequence ID" value="NM_065565.4"/>
</dbReference>
<dbReference type="FunCoup" id="Q22141">
    <property type="interactions" value="1473"/>
</dbReference>
<dbReference type="STRING" id="6239.T04A8.12.2"/>
<dbReference type="TCDB" id="9.B.131.1.3">
    <property type="family name" value="the post-gpi attachment protein (p-gap2) family"/>
</dbReference>
<dbReference type="PaxDb" id="6239-T04A8.12"/>
<dbReference type="PeptideAtlas" id="Q22141"/>
<dbReference type="EnsemblMetazoa" id="T04A8.12.1">
    <property type="protein sequence ID" value="T04A8.12.1"/>
    <property type="gene ID" value="WBGene00007045"/>
</dbReference>
<dbReference type="GeneID" id="188041"/>
<dbReference type="UCSC" id="T04A8.12">
    <property type="organism name" value="c. elegans"/>
</dbReference>
<dbReference type="AGR" id="WB:WBGene00007045"/>
<dbReference type="WormBase" id="T04A8.12">
    <property type="protein sequence ID" value="CE43481"/>
    <property type="gene ID" value="WBGene00007045"/>
    <property type="gene designation" value="pgap-2"/>
</dbReference>
<dbReference type="eggNOG" id="KOG3979">
    <property type="taxonomic scope" value="Eukaryota"/>
</dbReference>
<dbReference type="GeneTree" id="ENSGT00510000047299"/>
<dbReference type="HOGENOM" id="CLU_061191_1_0_1"/>
<dbReference type="InParanoid" id="Q22141"/>
<dbReference type="OMA" id="CVIWSIL"/>
<dbReference type="OrthoDB" id="68581at2759"/>
<dbReference type="PhylomeDB" id="Q22141"/>
<dbReference type="PRO" id="PR:Q22141"/>
<dbReference type="Proteomes" id="UP000001940">
    <property type="component" value="Chromosome III"/>
</dbReference>
<dbReference type="Bgee" id="WBGene00007045">
    <property type="expression patterns" value="Expressed in germ line (C elegans) and 4 other cell types or tissues"/>
</dbReference>
<dbReference type="GO" id="GO:0005789">
    <property type="term" value="C:endoplasmic reticulum membrane"/>
    <property type="evidence" value="ECO:0000250"/>
    <property type="project" value="UniProtKB"/>
</dbReference>
<dbReference type="GO" id="GO:0000139">
    <property type="term" value="C:Golgi membrane"/>
    <property type="evidence" value="ECO:0000250"/>
    <property type="project" value="UniProtKB"/>
</dbReference>
<dbReference type="GO" id="GO:0006506">
    <property type="term" value="P:GPI anchor biosynthetic process"/>
    <property type="evidence" value="ECO:0000250"/>
    <property type="project" value="UniProtKB"/>
</dbReference>
<dbReference type="InterPro" id="IPR019402">
    <property type="entry name" value="Frag1/DRAM/Sfk1"/>
</dbReference>
<dbReference type="InterPro" id="IPR039545">
    <property type="entry name" value="PGAP2"/>
</dbReference>
<dbReference type="PANTHER" id="PTHR12892">
    <property type="entry name" value="FGF RECEPTOR ACTIVATING PROTEIN 1"/>
    <property type="match status" value="1"/>
</dbReference>
<dbReference type="PANTHER" id="PTHR12892:SF11">
    <property type="entry name" value="POST-GPI ATTACHMENT TO PROTEINS FACTOR 2"/>
    <property type="match status" value="1"/>
</dbReference>
<dbReference type="Pfam" id="PF10277">
    <property type="entry name" value="Frag1"/>
    <property type="match status" value="1"/>
</dbReference>
<protein>
    <recommendedName>
        <fullName>Post-GPI attachment to proteins factor 2</fullName>
    </recommendedName>
</protein>
<sequence length="263" mass="29577">MAFGDDDILSIPFKYFVICIGGLPSSALLICVILSLLLHFDQATSTHCEVANWLPSISAAVSTYTPEKYIWRILIGLHIGPRLVVAIAFRNFLLGSPLRPLTGHKRLRFLCNLACFLNLLENFFLLALTSISSSEDHSLHAKCFGGFAICSIIYMLLSTWLFNETGRRTATNLGQRSHEYKILGAAIFVLCFFLGAYLYWRHNTYCEPGIYTLFALVEYSAVLSNIFFHCTLYYDFHGKNIVLTSSFGGGHYNLLPTQIDKDT</sequence>
<evidence type="ECO:0000250" key="1"/>
<evidence type="ECO:0000255" key="2"/>
<evidence type="ECO:0000305" key="3"/>
<evidence type="ECO:0000312" key="4">
    <source>
        <dbReference type="WormBase" id="T04A8.12"/>
    </source>
</evidence>
<reference key="1">
    <citation type="journal article" date="1998" name="Science">
        <title>Genome sequence of the nematode C. elegans: a platform for investigating biology.</title>
        <authorList>
            <consortium name="The C. elegans sequencing consortium"/>
        </authorList>
    </citation>
    <scope>NUCLEOTIDE SEQUENCE [LARGE SCALE GENOMIC DNA]</scope>
    <source>
        <strain>Bristol N2</strain>
    </source>
</reference>
<name>PGAP2_CAEEL</name>
<keyword id="KW-0256">Endoplasmic reticulum</keyword>
<keyword id="KW-0333">Golgi apparatus</keyword>
<keyword id="KW-0337">GPI-anchor biosynthesis</keyword>
<keyword id="KW-0472">Membrane</keyword>
<keyword id="KW-1185">Reference proteome</keyword>
<keyword id="KW-0812">Transmembrane</keyword>
<keyword id="KW-1133">Transmembrane helix</keyword>
<feature type="chain" id="PRO_0000326101" description="Post-GPI attachment to proteins factor 2">
    <location>
        <begin position="1"/>
        <end position="263"/>
    </location>
</feature>
<feature type="transmembrane region" description="Helical" evidence="2">
    <location>
        <begin position="16"/>
        <end position="36"/>
    </location>
</feature>
<feature type="transmembrane region" description="Helical" evidence="2">
    <location>
        <begin position="69"/>
        <end position="89"/>
    </location>
</feature>
<feature type="transmembrane region" description="Helical" evidence="2">
    <location>
        <begin position="109"/>
        <end position="129"/>
    </location>
</feature>
<feature type="transmembrane region" description="Helical" evidence="2">
    <location>
        <begin position="143"/>
        <end position="163"/>
    </location>
</feature>
<feature type="transmembrane region" description="Helical" evidence="2">
    <location>
        <begin position="180"/>
        <end position="200"/>
    </location>
</feature>
<feature type="transmembrane region" description="Helical" evidence="2">
    <location>
        <begin position="208"/>
        <end position="228"/>
    </location>
</feature>
<comment type="function">
    <text evidence="1">Involved in the lipid remodeling steps of GPI-anchor maturation. Required for stable expression of GPI-anchored proteins at the cell surface (By similarity).</text>
</comment>
<comment type="subcellular location">
    <subcellularLocation>
        <location evidence="1">Golgi apparatus membrane</location>
        <topology evidence="1">Multi-pass membrane protein</topology>
    </subcellularLocation>
    <subcellularLocation>
        <location evidence="1">Endoplasmic reticulum membrane</location>
        <topology evidence="1">Multi-pass membrane protein</topology>
    </subcellularLocation>
</comment>
<comment type="similarity">
    <text evidence="3">Belongs to the PGAP2 family.</text>
</comment>
<gene>
    <name evidence="4" type="primary">pgap-2</name>
    <name evidence="4" type="synonym">tag-189</name>
    <name evidence="4" type="ORF">T04A8.12</name>
</gene>
<accession>Q22141</accession>